<protein>
    <recommendedName>
        <fullName evidence="5">NURS complex subunit pir2</fullName>
    </recommendedName>
</protein>
<proteinExistence type="evidence at protein level"/>
<dbReference type="EMBL" id="CU329671">
    <property type="protein sequence ID" value="CAA22180.1"/>
    <property type="molecule type" value="Genomic_DNA"/>
</dbReference>
<dbReference type="PIR" id="T40660">
    <property type="entry name" value="T40660"/>
</dbReference>
<dbReference type="RefSeq" id="NP_595488.1">
    <property type="nucleotide sequence ID" value="NM_001021399.2"/>
</dbReference>
<dbReference type="PDB" id="7QY5">
    <property type="method" value="X-ray"/>
    <property type="resolution" value="2.77 A"/>
    <property type="chains" value="A/C=68-183, B/D=206-530"/>
</dbReference>
<dbReference type="PDBsum" id="7QY5"/>
<dbReference type="SMR" id="O94326"/>
<dbReference type="BioGRID" id="277658">
    <property type="interactions" value="267"/>
</dbReference>
<dbReference type="FunCoup" id="O94326">
    <property type="interactions" value="30"/>
</dbReference>
<dbReference type="IntAct" id="O94326">
    <property type="interactions" value="3"/>
</dbReference>
<dbReference type="STRING" id="284812.O94326"/>
<dbReference type="iPTMnet" id="O94326"/>
<dbReference type="PaxDb" id="4896-SPBC725.08.1"/>
<dbReference type="EnsemblFungi" id="SPBC725.08.1">
    <property type="protein sequence ID" value="SPBC725.08.1:pep"/>
    <property type="gene ID" value="SPBC725.08"/>
</dbReference>
<dbReference type="GeneID" id="2541143"/>
<dbReference type="KEGG" id="spo:2541143"/>
<dbReference type="PomBase" id="SPBC725.08">
    <property type="gene designation" value="pir2"/>
</dbReference>
<dbReference type="VEuPathDB" id="FungiDB:SPBC725.08"/>
<dbReference type="eggNOG" id="KOG2295">
    <property type="taxonomic scope" value="Eukaryota"/>
</dbReference>
<dbReference type="HOGENOM" id="CLU_031224_0_0_1"/>
<dbReference type="InParanoid" id="O94326"/>
<dbReference type="OMA" id="CALECDS"/>
<dbReference type="PhylomeDB" id="O94326"/>
<dbReference type="Reactome" id="R-SPO-72163">
    <property type="pathway name" value="mRNA Splicing - Major Pathway"/>
</dbReference>
<dbReference type="PRO" id="PR:O94326"/>
<dbReference type="Proteomes" id="UP000002485">
    <property type="component" value="Chromosome II"/>
</dbReference>
<dbReference type="GO" id="GO:0000785">
    <property type="term" value="C:chromatin"/>
    <property type="evidence" value="ECO:0000314"/>
    <property type="project" value="PomBase"/>
</dbReference>
<dbReference type="GO" id="GO:1990477">
    <property type="term" value="C:MTREC complex"/>
    <property type="evidence" value="ECO:0000314"/>
    <property type="project" value="PomBase"/>
</dbReference>
<dbReference type="GO" id="GO:0016604">
    <property type="term" value="C:nuclear body"/>
    <property type="evidence" value="ECO:0000314"/>
    <property type="project" value="PomBase"/>
</dbReference>
<dbReference type="GO" id="GO:0005634">
    <property type="term" value="C:nucleus"/>
    <property type="evidence" value="ECO:0007005"/>
    <property type="project" value="PomBase"/>
</dbReference>
<dbReference type="GO" id="GO:0106222">
    <property type="term" value="F:lncRNA binding"/>
    <property type="evidence" value="ECO:0000314"/>
    <property type="project" value="PomBase"/>
</dbReference>
<dbReference type="GO" id="GO:0008270">
    <property type="term" value="F:zinc ion binding"/>
    <property type="evidence" value="ECO:0007669"/>
    <property type="project" value="UniProtKB-KW"/>
</dbReference>
<dbReference type="GO" id="GO:0071039">
    <property type="term" value="P:nuclear polyadenylation-dependent CUT catabolic process"/>
    <property type="evidence" value="ECO:0000305"/>
    <property type="project" value="PomBase"/>
</dbReference>
<dbReference type="GO" id="GO:0031047">
    <property type="term" value="P:regulatory ncRNA-mediated gene silencing"/>
    <property type="evidence" value="ECO:0000269"/>
    <property type="project" value="PomBase"/>
</dbReference>
<dbReference type="GO" id="GO:0031048">
    <property type="term" value="P:regulatory ncRNA-mediated heterochromatin formation"/>
    <property type="evidence" value="ECO:0000266"/>
    <property type="project" value="PomBase"/>
</dbReference>
<dbReference type="InterPro" id="IPR039727">
    <property type="entry name" value="SE/Ars2"/>
</dbReference>
<dbReference type="InterPro" id="IPR007042">
    <property type="entry name" value="SERRATE/Ars2_C"/>
</dbReference>
<dbReference type="InterPro" id="IPR021933">
    <property type="entry name" value="SERRATE/Ars2_N"/>
</dbReference>
<dbReference type="InterPro" id="IPR013087">
    <property type="entry name" value="Znf_C2H2_type"/>
</dbReference>
<dbReference type="PANTHER" id="PTHR13165">
    <property type="entry name" value="ARSENITE-RESISTANCE PROTEIN 2"/>
    <property type="match status" value="1"/>
</dbReference>
<dbReference type="PANTHER" id="PTHR13165:SF0">
    <property type="entry name" value="SERRATE RNA EFFECTOR MOLECULE HOMOLOG"/>
    <property type="match status" value="1"/>
</dbReference>
<dbReference type="Pfam" id="PF04959">
    <property type="entry name" value="ARS2"/>
    <property type="match status" value="1"/>
</dbReference>
<dbReference type="Pfam" id="PF12066">
    <property type="entry name" value="SERRATE_Ars2_N"/>
    <property type="match status" value="1"/>
</dbReference>
<dbReference type="PROSITE" id="PS00028">
    <property type="entry name" value="ZINC_FINGER_C2H2_1"/>
    <property type="match status" value="1"/>
</dbReference>
<gene>
    <name evidence="6" type="primary">pir2</name>
    <name evidence="6" type="synonym">ars2</name>
    <name evidence="6" type="ORF">SPBC725.08</name>
</gene>
<feature type="chain" id="PRO_0000352817" description="NURS complex subunit pir2">
    <location>
        <begin position="1"/>
        <end position="609"/>
    </location>
</feature>
<feature type="zinc finger region" description="C2H2-type">
    <location>
        <begin position="474"/>
        <end position="499"/>
    </location>
</feature>
<feature type="region of interest" description="Disordered" evidence="1">
    <location>
        <begin position="1"/>
        <end position="60"/>
    </location>
</feature>
<feature type="region of interest" description="Disordered" evidence="1">
    <location>
        <begin position="187"/>
        <end position="210"/>
    </location>
</feature>
<feature type="compositionally biased region" description="Basic and acidic residues" evidence="1">
    <location>
        <begin position="1"/>
        <end position="25"/>
    </location>
</feature>
<feature type="compositionally biased region" description="Low complexity" evidence="1">
    <location>
        <begin position="27"/>
        <end position="36"/>
    </location>
</feature>
<feature type="compositionally biased region" description="Basic and acidic residues" evidence="1">
    <location>
        <begin position="37"/>
        <end position="57"/>
    </location>
</feature>
<feature type="compositionally biased region" description="Polar residues" evidence="1">
    <location>
        <begin position="201"/>
        <end position="210"/>
    </location>
</feature>
<feature type="modified residue" description="Phosphoserine" evidence="3">
    <location>
        <position position="28"/>
    </location>
</feature>
<feature type="modified residue" description="Phosphoserine" evidence="3">
    <location>
        <position position="30"/>
    </location>
</feature>
<feature type="mutagenesis site" description="Decreases cell population growth at high temperature; when associated with P-316." evidence="4">
    <original>F</original>
    <variation>L</variation>
    <location>
        <position position="165"/>
    </location>
</feature>
<feature type="mutagenesis site" description="Decreases cell population growth at high temperature; when associated with L-165." evidence="4">
    <original>S</original>
    <variation>P</variation>
    <location>
        <position position="316"/>
    </location>
</feature>
<feature type="helix" evidence="7">
    <location>
        <begin position="72"/>
        <end position="74"/>
    </location>
</feature>
<feature type="helix" evidence="7">
    <location>
        <begin position="81"/>
        <end position="91"/>
    </location>
</feature>
<feature type="turn" evidence="7">
    <location>
        <begin position="99"/>
        <end position="105"/>
    </location>
</feature>
<feature type="helix" evidence="7">
    <location>
        <begin position="106"/>
        <end position="128"/>
    </location>
</feature>
<feature type="helix" evidence="7">
    <location>
        <begin position="132"/>
        <end position="138"/>
    </location>
</feature>
<feature type="helix" evidence="7">
    <location>
        <begin position="142"/>
        <end position="144"/>
    </location>
</feature>
<feature type="helix" evidence="7">
    <location>
        <begin position="152"/>
        <end position="170"/>
    </location>
</feature>
<feature type="turn" evidence="7">
    <location>
        <begin position="171"/>
        <end position="175"/>
    </location>
</feature>
<feature type="helix" evidence="7">
    <location>
        <begin position="210"/>
        <end position="220"/>
    </location>
</feature>
<feature type="strand" evidence="7">
    <location>
        <begin position="223"/>
        <end position="229"/>
    </location>
</feature>
<feature type="helix" evidence="7">
    <location>
        <begin position="235"/>
        <end position="243"/>
    </location>
</feature>
<feature type="strand" evidence="7">
    <location>
        <begin position="248"/>
        <end position="253"/>
    </location>
</feature>
<feature type="turn" evidence="7">
    <location>
        <begin position="258"/>
        <end position="260"/>
    </location>
</feature>
<feature type="strand" evidence="7">
    <location>
        <begin position="264"/>
        <end position="270"/>
    </location>
</feature>
<feature type="helix" evidence="7">
    <location>
        <begin position="278"/>
        <end position="283"/>
    </location>
</feature>
<feature type="strand" evidence="7">
    <location>
        <begin position="287"/>
        <end position="289"/>
    </location>
</feature>
<feature type="strand" evidence="7">
    <location>
        <begin position="308"/>
        <end position="310"/>
    </location>
</feature>
<feature type="helix" evidence="7">
    <location>
        <begin position="312"/>
        <end position="314"/>
    </location>
</feature>
<feature type="helix" evidence="7">
    <location>
        <begin position="317"/>
        <end position="337"/>
    </location>
</feature>
<feature type="helix" evidence="7">
    <location>
        <begin position="344"/>
        <end position="354"/>
    </location>
</feature>
<feature type="helix" evidence="7">
    <location>
        <begin position="368"/>
        <end position="383"/>
    </location>
</feature>
<feature type="turn" evidence="7">
    <location>
        <begin position="389"/>
        <end position="392"/>
    </location>
</feature>
<feature type="helix" evidence="7">
    <location>
        <begin position="398"/>
        <end position="401"/>
    </location>
</feature>
<feature type="turn" evidence="7">
    <location>
        <begin position="402"/>
        <end position="404"/>
    </location>
</feature>
<feature type="strand" evidence="7">
    <location>
        <begin position="409"/>
        <end position="411"/>
    </location>
</feature>
<feature type="helix" evidence="7">
    <location>
        <begin position="422"/>
        <end position="439"/>
    </location>
</feature>
<feature type="helix" evidence="7">
    <location>
        <begin position="441"/>
        <end position="443"/>
    </location>
</feature>
<feature type="helix" evidence="7">
    <location>
        <begin position="447"/>
        <end position="449"/>
    </location>
</feature>
<feature type="helix" evidence="7">
    <location>
        <begin position="454"/>
        <end position="465"/>
    </location>
</feature>
<feature type="strand" evidence="7">
    <location>
        <begin position="466"/>
        <end position="468"/>
    </location>
</feature>
<feature type="strand" evidence="7">
    <location>
        <begin position="470"/>
        <end position="472"/>
    </location>
</feature>
<feature type="strand" evidence="7">
    <location>
        <begin position="474"/>
        <end position="476"/>
    </location>
</feature>
<feature type="strand" evidence="7">
    <location>
        <begin position="478"/>
        <end position="480"/>
    </location>
</feature>
<feature type="strand" evidence="7">
    <location>
        <begin position="484"/>
        <end position="487"/>
    </location>
</feature>
<feature type="helix" evidence="7">
    <location>
        <begin position="488"/>
        <end position="497"/>
    </location>
</feature>
<feature type="helix" evidence="7">
    <location>
        <begin position="500"/>
        <end position="517"/>
    </location>
</feature>
<feature type="helix" evidence="7">
    <location>
        <begin position="526"/>
        <end position="528"/>
    </location>
</feature>
<reference key="1">
    <citation type="journal article" date="2002" name="Nature">
        <title>The genome sequence of Schizosaccharomyces pombe.</title>
        <authorList>
            <person name="Wood V."/>
            <person name="Gwilliam R."/>
            <person name="Rajandream M.A."/>
            <person name="Lyne M.H."/>
            <person name="Lyne R."/>
            <person name="Stewart A."/>
            <person name="Sgouros J.G."/>
            <person name="Peat N."/>
            <person name="Hayles J."/>
            <person name="Baker S.G."/>
            <person name="Basham D."/>
            <person name="Bowman S."/>
            <person name="Brooks K."/>
            <person name="Brown D."/>
            <person name="Brown S."/>
            <person name="Chillingworth T."/>
            <person name="Churcher C.M."/>
            <person name="Collins M."/>
            <person name="Connor R."/>
            <person name="Cronin A."/>
            <person name="Davis P."/>
            <person name="Feltwell T."/>
            <person name="Fraser A."/>
            <person name="Gentles S."/>
            <person name="Goble A."/>
            <person name="Hamlin N."/>
            <person name="Harris D.E."/>
            <person name="Hidalgo J."/>
            <person name="Hodgson G."/>
            <person name="Holroyd S."/>
            <person name="Hornsby T."/>
            <person name="Howarth S."/>
            <person name="Huckle E.J."/>
            <person name="Hunt S."/>
            <person name="Jagels K."/>
            <person name="James K.D."/>
            <person name="Jones L."/>
            <person name="Jones M."/>
            <person name="Leather S."/>
            <person name="McDonald S."/>
            <person name="McLean J."/>
            <person name="Mooney P."/>
            <person name="Moule S."/>
            <person name="Mungall K.L."/>
            <person name="Murphy L.D."/>
            <person name="Niblett D."/>
            <person name="Odell C."/>
            <person name="Oliver K."/>
            <person name="O'Neil S."/>
            <person name="Pearson D."/>
            <person name="Quail M.A."/>
            <person name="Rabbinowitsch E."/>
            <person name="Rutherford K.M."/>
            <person name="Rutter S."/>
            <person name="Saunders D."/>
            <person name="Seeger K."/>
            <person name="Sharp S."/>
            <person name="Skelton J."/>
            <person name="Simmonds M.N."/>
            <person name="Squares R."/>
            <person name="Squares S."/>
            <person name="Stevens K."/>
            <person name="Taylor K."/>
            <person name="Taylor R.G."/>
            <person name="Tivey A."/>
            <person name="Walsh S.V."/>
            <person name="Warren T."/>
            <person name="Whitehead S."/>
            <person name="Woodward J.R."/>
            <person name="Volckaert G."/>
            <person name="Aert R."/>
            <person name="Robben J."/>
            <person name="Grymonprez B."/>
            <person name="Weltjens I."/>
            <person name="Vanstreels E."/>
            <person name="Rieger M."/>
            <person name="Schaefer M."/>
            <person name="Mueller-Auer S."/>
            <person name="Gabel C."/>
            <person name="Fuchs M."/>
            <person name="Duesterhoeft A."/>
            <person name="Fritzc C."/>
            <person name="Holzer E."/>
            <person name="Moestl D."/>
            <person name="Hilbert H."/>
            <person name="Borzym K."/>
            <person name="Langer I."/>
            <person name="Beck A."/>
            <person name="Lehrach H."/>
            <person name="Reinhardt R."/>
            <person name="Pohl T.M."/>
            <person name="Eger P."/>
            <person name="Zimmermann W."/>
            <person name="Wedler H."/>
            <person name="Wambutt R."/>
            <person name="Purnelle B."/>
            <person name="Goffeau A."/>
            <person name="Cadieu E."/>
            <person name="Dreano S."/>
            <person name="Gloux S."/>
            <person name="Lelaure V."/>
            <person name="Mottier S."/>
            <person name="Galibert F."/>
            <person name="Aves S.J."/>
            <person name="Xiang Z."/>
            <person name="Hunt C."/>
            <person name="Moore K."/>
            <person name="Hurst S.M."/>
            <person name="Lucas M."/>
            <person name="Rochet M."/>
            <person name="Gaillardin C."/>
            <person name="Tallada V.A."/>
            <person name="Garzon A."/>
            <person name="Thode G."/>
            <person name="Daga R.R."/>
            <person name="Cruzado L."/>
            <person name="Jimenez J."/>
            <person name="Sanchez M."/>
            <person name="del Rey F."/>
            <person name="Benito J."/>
            <person name="Dominguez A."/>
            <person name="Revuelta J.L."/>
            <person name="Moreno S."/>
            <person name="Armstrong J."/>
            <person name="Forsburg S.L."/>
            <person name="Cerutti L."/>
            <person name="Lowe T."/>
            <person name="McCombie W.R."/>
            <person name="Paulsen I."/>
            <person name="Potashkin J."/>
            <person name="Shpakovski G.V."/>
            <person name="Ussery D."/>
            <person name="Barrell B.G."/>
            <person name="Nurse P."/>
        </authorList>
    </citation>
    <scope>NUCLEOTIDE SEQUENCE [LARGE SCALE GENOMIC DNA]</scope>
    <source>
        <strain>972 / ATCC 24843</strain>
    </source>
</reference>
<reference key="2">
    <citation type="journal article" date="2006" name="Nat. Biotechnol.">
        <title>ORFeome cloning and global analysis of protein localization in the fission yeast Schizosaccharomyces pombe.</title>
        <authorList>
            <person name="Matsuyama A."/>
            <person name="Arai R."/>
            <person name="Yashiroda Y."/>
            <person name="Shirai A."/>
            <person name="Kamata A."/>
            <person name="Sekido S."/>
            <person name="Kobayashi Y."/>
            <person name="Hashimoto A."/>
            <person name="Hamamoto M."/>
            <person name="Hiraoka Y."/>
            <person name="Horinouchi S."/>
            <person name="Yoshida M."/>
        </authorList>
    </citation>
    <scope>SUBCELLULAR LOCATION [LARGE SCALE ANALYSIS]</scope>
</reference>
<reference key="3">
    <citation type="journal article" date="2008" name="J. Proteome Res.">
        <title>Phosphoproteome analysis of fission yeast.</title>
        <authorList>
            <person name="Wilson-Grady J.T."/>
            <person name="Villen J."/>
            <person name="Gygi S.P."/>
        </authorList>
    </citation>
    <scope>PHOSPHORYLATION [LARGE SCALE ANALYSIS] AT SER-28 AND SER-30</scope>
    <scope>IDENTIFICATION BY MASS SPECTROMETRY</scope>
</reference>
<reference key="4">
    <citation type="journal article" date="2016" name="Mol. Cell">
        <title>Enhancer of Rudimentary Cooperates with Conserved RNA-Processing Factors to Promote Meiotic mRNA Decay and Facultative Heterochromatin Assembly.</title>
        <authorList>
            <person name="Sugiyama T."/>
            <person name="Thillainadesan G."/>
            <person name="Chalamcharla V.R."/>
            <person name="Meng Z."/>
            <person name="Balachandran V."/>
            <person name="Dhakshnamoorthy J."/>
            <person name="Zhou M."/>
            <person name="Grewal S.I.S."/>
        </authorList>
    </citation>
    <scope>INTERACTION WITH CCR4</scope>
    <scope>MUTAGENESIS OF PHE-165 AND SER-316</scope>
</reference>
<sequence length="609" mass="70865">MSEVHQESEVEYSRWKRERSPERSQRRSQSPPGEQSAYHRERSPLRKRGNYYDDRTRASGPYPTFTKPLIDPYTQTNAVSYERFIRWYSKENHISATTEDLYNSLHGTYNNYKQDLYARTARSFVESHCDEAWFEDSYWVDESQGRVLEVSENEKSYRRALYDKFMDRLDAGYYDDFQLPTAEDVIEKPSIPDNDTDDSILPSNDPQLSKWNQDSRNDAMENTLLVSHVLPNISVAQIHNALDGISFVQHFSLSTINLIKNDERSLWVHFKAGTNMDGAKEAVDGIQLDSNFTIESENPKIPTHTHPIPIFEIASSEQTCKNLLEKLIRFIDRASTKYSLPNDAAQRIEDRLKTHASMKDDDDKPTNFHDIRLSDLYAEYLRQVATFDFWTSKEYESLIALLQDSPAGYSRKKFNPSKEVGQEENIWLSDLENNFACLLEPENVDIKAKGALPVEDFINNELDSVIMKEDEQKYRCHVGTCAKLFLGPEFVRKHINKKHKDWLDHIKKVAICLYGYVLDPCRAMDPKVVSTSYVSLQILNKPYVGFRNINANYTFPTTSYSRRNDEEITSGASSQKSYSRQEPMIHRREFYRTYQDLDAPNQEVPELDY</sequence>
<keyword id="KW-0002">3D-structure</keyword>
<keyword id="KW-0479">Metal-binding</keyword>
<keyword id="KW-0539">Nucleus</keyword>
<keyword id="KW-0597">Phosphoprotein</keyword>
<keyword id="KW-1185">Reference proteome</keyword>
<keyword id="KW-0862">Zinc</keyword>
<keyword id="KW-0863">Zinc-finger</keyword>
<accession>O94326</accession>
<evidence type="ECO:0000256" key="1">
    <source>
        <dbReference type="SAM" id="MobiDB-lite"/>
    </source>
</evidence>
<evidence type="ECO:0000269" key="2">
    <source>
    </source>
</evidence>
<evidence type="ECO:0000269" key="3">
    <source>
    </source>
</evidence>
<evidence type="ECO:0000269" key="4">
    <source>
    </source>
</evidence>
<evidence type="ECO:0000305" key="5"/>
<evidence type="ECO:0000312" key="6">
    <source>
        <dbReference type="PomBase" id="SPBC725.08"/>
    </source>
</evidence>
<evidence type="ECO:0007829" key="7">
    <source>
        <dbReference type="PDB" id="7QY5"/>
    </source>
</evidence>
<name>PIR2_SCHPO</name>
<organism>
    <name type="scientific">Schizosaccharomyces pombe (strain 972 / ATCC 24843)</name>
    <name type="common">Fission yeast</name>
    <dbReference type="NCBI Taxonomy" id="284812"/>
    <lineage>
        <taxon>Eukaryota</taxon>
        <taxon>Fungi</taxon>
        <taxon>Dikarya</taxon>
        <taxon>Ascomycota</taxon>
        <taxon>Taphrinomycotina</taxon>
        <taxon>Schizosaccharomycetes</taxon>
        <taxon>Schizosaccharomycetales</taxon>
        <taxon>Schizosaccharomycetaceae</taxon>
        <taxon>Schizosaccharomyces</taxon>
    </lineage>
</organism>
<comment type="subunit">
    <text evidence="4">Interacts with ccr4.</text>
</comment>
<comment type="subcellular location">
    <subcellularLocation>
        <location evidence="2">Nucleus</location>
    </subcellularLocation>
</comment>
<comment type="similarity">
    <text evidence="5">Belongs to the ARS2 family.</text>
</comment>